<proteinExistence type="inferred from homology"/>
<sequence>MMSSSSSEIDVVKTRIPTYDEDDNTVLYAYETKPEFVNKELNIVSDASCNTEEQQKTVNDVLIHCQVIYDAMQNLDKKIDVIRRKVSKIQRFCVKSLWTNRKRYGYKKYSYRLAKKLKLKKMKKNEVYESFSYPESYSPTLPVSRCENNSPSNFPRPSFCMEEYRRAEPEEDPILSRTPSPVHPSDFSEHNYQPYYASDGATYGSSSGTCRGNPRADGIHNTYSTDHASAAPPSVTGSLFGNDCYIEEGSITKHPSTWSVEAVVLFLKQTDPLALCPLVDLFRSHEIDGKALLLLTSDVLLKHLGVKLGTAVKLCYYIDRLKQGKCFEN</sequence>
<evidence type="ECO:0000250" key="1"/>
<evidence type="ECO:0000250" key="2">
    <source>
        <dbReference type="UniProtKB" id="Q9UN30"/>
    </source>
</evidence>
<evidence type="ECO:0000255" key="3">
    <source>
        <dbReference type="PROSITE-ProRule" id="PRU00184"/>
    </source>
</evidence>
<evidence type="ECO:0000305" key="4"/>
<dbReference type="EMBL" id="EU370784">
    <property type="protein sequence ID" value="ABY68579.1"/>
    <property type="molecule type" value="Genomic_DNA"/>
</dbReference>
<dbReference type="SMR" id="B0FZP0"/>
<dbReference type="FunCoup" id="B0FZP0">
    <property type="interactions" value="198"/>
</dbReference>
<dbReference type="STRING" id="61853.ENSNLEP00000011721"/>
<dbReference type="eggNOG" id="KOG3766">
    <property type="taxonomic scope" value="Eukaryota"/>
</dbReference>
<dbReference type="InParanoid" id="B0FZP0"/>
<dbReference type="Proteomes" id="UP000001073">
    <property type="component" value="Unplaced"/>
</dbReference>
<dbReference type="GO" id="GO:0005634">
    <property type="term" value="C:nucleus"/>
    <property type="evidence" value="ECO:0007669"/>
    <property type="project" value="UniProtKB-SubCell"/>
</dbReference>
<dbReference type="CDD" id="cd09578">
    <property type="entry name" value="SAM_Scm"/>
    <property type="match status" value="1"/>
</dbReference>
<dbReference type="FunFam" id="1.10.150.50:FF:000018">
    <property type="entry name" value="Polycomb protein scmh1 isoform 4"/>
    <property type="match status" value="1"/>
</dbReference>
<dbReference type="Gene3D" id="1.10.150.50">
    <property type="entry name" value="Transcription Factor, Ets-1"/>
    <property type="match status" value="1"/>
</dbReference>
<dbReference type="InterPro" id="IPR001660">
    <property type="entry name" value="SAM"/>
</dbReference>
<dbReference type="InterPro" id="IPR013761">
    <property type="entry name" value="SAM/pointed_sf"/>
</dbReference>
<dbReference type="InterPro" id="IPR047531">
    <property type="entry name" value="SAM_Scm-like"/>
</dbReference>
<dbReference type="PANTHER" id="PTHR47305">
    <property type="entry name" value="BEN DOMAIN-CONTAINING PROTEIN 2"/>
    <property type="match status" value="1"/>
</dbReference>
<dbReference type="PANTHER" id="PTHR47305:SF2">
    <property type="entry name" value="SAM DOMAIN-CONTAINING PROTEIN"/>
    <property type="match status" value="1"/>
</dbReference>
<dbReference type="Pfam" id="PF00536">
    <property type="entry name" value="SAM_1"/>
    <property type="match status" value="1"/>
</dbReference>
<dbReference type="SMART" id="SM00454">
    <property type="entry name" value="SAM"/>
    <property type="match status" value="1"/>
</dbReference>
<dbReference type="SUPFAM" id="SSF47769">
    <property type="entry name" value="SAM/Pointed domain"/>
    <property type="match status" value="1"/>
</dbReference>
<dbReference type="PROSITE" id="PS50105">
    <property type="entry name" value="SAM_DOMAIN"/>
    <property type="match status" value="1"/>
</dbReference>
<accession>B0FZP0</accession>
<comment type="function">
    <text evidence="1">Putative Polycomb group (PcG) protein. PcG proteins act by forming multiprotein complexes, which are required to maintain the transcriptionally repressive state of homeotic genes throughout development. May be involved in spermatogenesis during sexual maturation (By similarity).</text>
</comment>
<comment type="subcellular location">
    <subcellularLocation>
        <location evidence="4">Nucleus</location>
    </subcellularLocation>
</comment>
<comment type="similarity">
    <text evidence="4">Belongs to the SCM family.</text>
</comment>
<gene>
    <name type="primary">SCML1</name>
</gene>
<organism>
    <name type="scientific">Nomascus leucogenys</name>
    <name type="common">Northern white-cheeked gibbon</name>
    <name type="synonym">Hylobates leucogenys</name>
    <dbReference type="NCBI Taxonomy" id="61853"/>
    <lineage>
        <taxon>Eukaryota</taxon>
        <taxon>Metazoa</taxon>
        <taxon>Chordata</taxon>
        <taxon>Craniata</taxon>
        <taxon>Vertebrata</taxon>
        <taxon>Euteleostomi</taxon>
        <taxon>Mammalia</taxon>
        <taxon>Eutheria</taxon>
        <taxon>Euarchontoglires</taxon>
        <taxon>Primates</taxon>
        <taxon>Haplorrhini</taxon>
        <taxon>Catarrhini</taxon>
        <taxon>Hylobatidae</taxon>
        <taxon>Nomascus</taxon>
    </lineage>
</organism>
<feature type="chain" id="PRO_0000380549" description="Sex comb on midleg-like protein 1">
    <location>
        <begin position="1"/>
        <end position="329"/>
    </location>
</feature>
<feature type="domain" description="SAM" evidence="3">
    <location>
        <begin position="258"/>
        <end position="325"/>
    </location>
</feature>
<feature type="modified residue" description="Phosphoserine" evidence="2">
    <location>
        <position position="138"/>
    </location>
</feature>
<feature type="modified residue" description="Phosphoserine" evidence="2">
    <location>
        <position position="238"/>
    </location>
</feature>
<reference key="1">
    <citation type="journal article" date="2008" name="BMC Evol. Biol.">
        <title>Adaptive evolution of SCML1 in primates, a gene involved in male reproduction.</title>
        <authorList>
            <person name="Wu H.-H."/>
            <person name="Su B."/>
        </authorList>
    </citation>
    <scope>NUCLEOTIDE SEQUENCE [GENOMIC DNA]</scope>
</reference>
<keyword id="KW-0539">Nucleus</keyword>
<keyword id="KW-0597">Phosphoprotein</keyword>
<keyword id="KW-1185">Reference proteome</keyword>
<keyword id="KW-0678">Repressor</keyword>
<keyword id="KW-0804">Transcription</keyword>
<keyword id="KW-0805">Transcription regulation</keyword>
<protein>
    <recommendedName>
        <fullName>Sex comb on midleg-like protein 1</fullName>
    </recommendedName>
</protein>
<name>SCML1_NOMLE</name>